<feature type="initiator methionine" description="Removed" evidence="4">
    <location>
        <position position="1"/>
    </location>
</feature>
<feature type="chain" id="PRO_0000147468" description="Methyl-coenzyme M reductase I subunit beta">
    <location>
        <begin position="2"/>
        <end position="443"/>
    </location>
</feature>
<feature type="binding site" evidence="1 2 3 8 11 16 19 20 26 27">
    <location>
        <position position="367"/>
    </location>
    <ligand>
        <name>coenzyme M</name>
        <dbReference type="ChEBI" id="CHEBI:58319"/>
    </ligand>
</feature>
<feature type="binding site" evidence="1 2 3 7 8 11 16 19 20 26 27 28">
    <location>
        <position position="369"/>
    </location>
    <ligand>
        <name>coenzyme B</name>
        <dbReference type="ChEBI" id="CHEBI:58596"/>
    </ligand>
</feature>
<feature type="strand" evidence="29">
    <location>
        <begin position="7"/>
        <end position="11"/>
    </location>
</feature>
<feature type="strand" evidence="30">
    <location>
        <begin position="13"/>
        <end position="15"/>
    </location>
</feature>
<feature type="strand" evidence="29">
    <location>
        <begin position="17"/>
        <end position="23"/>
    </location>
</feature>
<feature type="helix" evidence="29">
    <location>
        <begin position="24"/>
        <end position="27"/>
    </location>
</feature>
<feature type="turn" evidence="29">
    <location>
        <begin position="29"/>
        <end position="31"/>
    </location>
</feature>
<feature type="helix" evidence="29">
    <location>
        <begin position="33"/>
        <end position="44"/>
    </location>
</feature>
<feature type="strand" evidence="29">
    <location>
        <begin position="45"/>
        <end position="49"/>
    </location>
</feature>
<feature type="helix" evidence="29">
    <location>
        <begin position="50"/>
        <end position="59"/>
    </location>
</feature>
<feature type="helix" evidence="29">
    <location>
        <begin position="79"/>
        <end position="81"/>
    </location>
</feature>
<feature type="helix" evidence="29">
    <location>
        <begin position="82"/>
        <end position="93"/>
    </location>
</feature>
<feature type="strand" evidence="29">
    <location>
        <begin position="102"/>
        <end position="106"/>
    </location>
</feature>
<feature type="helix" evidence="29">
    <location>
        <begin position="107"/>
        <end position="109"/>
    </location>
</feature>
<feature type="strand" evidence="29">
    <location>
        <begin position="111"/>
        <end position="115"/>
    </location>
</feature>
<feature type="helix" evidence="29">
    <location>
        <begin position="118"/>
        <end position="122"/>
    </location>
</feature>
<feature type="strand" evidence="29">
    <location>
        <begin position="124"/>
        <end position="127"/>
    </location>
</feature>
<feature type="helix" evidence="29">
    <location>
        <begin position="129"/>
        <end position="146"/>
    </location>
</feature>
<feature type="turn" evidence="29">
    <location>
        <begin position="150"/>
        <end position="152"/>
    </location>
</feature>
<feature type="helix" evidence="29">
    <location>
        <begin position="153"/>
        <end position="161"/>
    </location>
</feature>
<feature type="turn" evidence="29">
    <location>
        <begin position="162"/>
        <end position="166"/>
    </location>
</feature>
<feature type="strand" evidence="29">
    <location>
        <begin position="167"/>
        <end position="169"/>
    </location>
</feature>
<feature type="strand" evidence="29">
    <location>
        <begin position="174"/>
        <end position="176"/>
    </location>
</feature>
<feature type="helix" evidence="29">
    <location>
        <begin position="182"/>
        <end position="184"/>
    </location>
</feature>
<feature type="helix" evidence="29">
    <location>
        <begin position="191"/>
        <end position="193"/>
    </location>
</feature>
<feature type="helix" evidence="29">
    <location>
        <begin position="197"/>
        <end position="203"/>
    </location>
</feature>
<feature type="turn" evidence="29">
    <location>
        <begin position="204"/>
        <end position="206"/>
    </location>
</feature>
<feature type="helix" evidence="29">
    <location>
        <begin position="208"/>
        <end position="225"/>
    </location>
</feature>
<feature type="turn" evidence="29">
    <location>
        <begin position="226"/>
        <end position="229"/>
    </location>
</feature>
<feature type="helix" evidence="29">
    <location>
        <begin position="231"/>
        <end position="233"/>
    </location>
</feature>
<feature type="helix" evidence="29">
    <location>
        <begin position="234"/>
        <end position="245"/>
    </location>
</feature>
<feature type="helix" evidence="29">
    <location>
        <begin position="248"/>
        <end position="250"/>
    </location>
</feature>
<feature type="helix" evidence="29">
    <location>
        <begin position="251"/>
        <end position="259"/>
    </location>
</feature>
<feature type="turn" evidence="29">
    <location>
        <begin position="260"/>
        <end position="262"/>
    </location>
</feature>
<feature type="helix" evidence="29">
    <location>
        <begin position="265"/>
        <end position="278"/>
    </location>
</feature>
<feature type="strand" evidence="29">
    <location>
        <begin position="283"/>
        <end position="288"/>
    </location>
</feature>
<feature type="strand" evidence="29">
    <location>
        <begin position="291"/>
        <end position="295"/>
    </location>
</feature>
<feature type="helix" evidence="29">
    <location>
        <begin position="299"/>
        <end position="321"/>
    </location>
</feature>
<feature type="helix" evidence="29">
    <location>
        <begin position="324"/>
        <end position="326"/>
    </location>
</feature>
<feature type="helix" evidence="29">
    <location>
        <begin position="327"/>
        <end position="342"/>
    </location>
</feature>
<feature type="helix" evidence="29">
    <location>
        <begin position="347"/>
        <end position="350"/>
    </location>
</feature>
<feature type="helix" evidence="29">
    <location>
        <begin position="351"/>
        <end position="361"/>
    </location>
</feature>
<feature type="strand" evidence="29">
    <location>
        <begin position="364"/>
        <end position="368"/>
    </location>
</feature>
<feature type="helix" evidence="29">
    <location>
        <begin position="372"/>
        <end position="374"/>
    </location>
</feature>
<feature type="turn" evidence="29">
    <location>
        <begin position="380"/>
        <end position="382"/>
    </location>
</feature>
<feature type="strand" evidence="29">
    <location>
        <begin position="384"/>
        <end position="389"/>
    </location>
</feature>
<feature type="helix" evidence="29">
    <location>
        <begin position="390"/>
        <end position="398"/>
    </location>
</feature>
<feature type="helix" evidence="29">
    <location>
        <begin position="408"/>
        <end position="411"/>
    </location>
</feature>
<feature type="helix" evidence="29">
    <location>
        <begin position="413"/>
        <end position="419"/>
    </location>
</feature>
<feature type="helix" evidence="29">
    <location>
        <begin position="423"/>
        <end position="426"/>
    </location>
</feature>
<feature type="helix" evidence="29">
    <location>
        <begin position="428"/>
        <end position="439"/>
    </location>
</feature>
<feature type="helix" evidence="29">
    <location>
        <begin position="440"/>
        <end position="442"/>
    </location>
</feature>
<evidence type="ECO:0000269" key="1">
    <source>
    </source>
</evidence>
<evidence type="ECO:0000269" key="2">
    <source>
    </source>
</evidence>
<evidence type="ECO:0000269" key="3">
    <source>
    </source>
</evidence>
<evidence type="ECO:0000269" key="4">
    <source>
    </source>
</evidence>
<evidence type="ECO:0000269" key="5">
    <source>
    </source>
</evidence>
<evidence type="ECO:0000269" key="6">
    <source>
    </source>
</evidence>
<evidence type="ECO:0000269" key="7">
    <source>
    </source>
</evidence>
<evidence type="ECO:0000269" key="8">
    <source>
    </source>
</evidence>
<evidence type="ECO:0000269" key="9">
    <source>
    </source>
</evidence>
<evidence type="ECO:0000269" key="10">
    <source>
    </source>
</evidence>
<evidence type="ECO:0000269" key="11">
    <source>
    </source>
</evidence>
<evidence type="ECO:0000303" key="12">
    <source>
    </source>
</evidence>
<evidence type="ECO:0000305" key="13"/>
<evidence type="ECO:0000305" key="14">
    <source>
    </source>
</evidence>
<evidence type="ECO:0007744" key="15">
    <source>
        <dbReference type="PDB" id="1HBM"/>
    </source>
</evidence>
<evidence type="ECO:0007744" key="16">
    <source>
        <dbReference type="PDB" id="1HBN"/>
    </source>
</evidence>
<evidence type="ECO:0007744" key="17">
    <source>
        <dbReference type="PDB" id="1HBO"/>
    </source>
</evidence>
<evidence type="ECO:0007744" key="18">
    <source>
        <dbReference type="PDB" id="1HBU"/>
    </source>
</evidence>
<evidence type="ECO:0007744" key="19">
    <source>
        <dbReference type="PDB" id="1MRO"/>
    </source>
</evidence>
<evidence type="ECO:0007744" key="20">
    <source>
        <dbReference type="PDB" id="3M1V"/>
    </source>
</evidence>
<evidence type="ECO:0007744" key="21">
    <source>
        <dbReference type="PDB" id="3M2R"/>
    </source>
</evidence>
<evidence type="ECO:0007744" key="22">
    <source>
        <dbReference type="PDB" id="3M2U"/>
    </source>
</evidence>
<evidence type="ECO:0007744" key="23">
    <source>
        <dbReference type="PDB" id="3M2V"/>
    </source>
</evidence>
<evidence type="ECO:0007744" key="24">
    <source>
        <dbReference type="PDB" id="3M30"/>
    </source>
</evidence>
<evidence type="ECO:0007744" key="25">
    <source>
        <dbReference type="PDB" id="3M32"/>
    </source>
</evidence>
<evidence type="ECO:0007744" key="26">
    <source>
        <dbReference type="PDB" id="3POT"/>
    </source>
</evidence>
<evidence type="ECO:0007744" key="27">
    <source>
        <dbReference type="PDB" id="5A0Y"/>
    </source>
</evidence>
<evidence type="ECO:0007744" key="28">
    <source>
        <dbReference type="PDB" id="5G0R"/>
    </source>
</evidence>
<evidence type="ECO:0007829" key="29">
    <source>
        <dbReference type="PDB" id="5A0Y"/>
    </source>
</evidence>
<evidence type="ECO:0007829" key="30">
    <source>
        <dbReference type="PDB" id="7B2H"/>
    </source>
</evidence>
<keyword id="KW-0002">3D-structure</keyword>
<keyword id="KW-0963">Cytoplasm</keyword>
<keyword id="KW-0903">Direct protein sequencing</keyword>
<keyword id="KW-0484">Methanogenesis</keyword>
<keyword id="KW-0808">Transferase</keyword>
<comment type="function">
    <text evidence="4 9">Component of the methyl-coenzyme M reductase (MCR) I that catalyzes the reductive cleavage of methyl-coenzyme M (CoM-S-CH3 or 2-(methylthio)ethanesulfonate) using coenzyme B (CoB or 7-mercaptoheptanoylthreonine phosphate) as reductant which results in the production of methane and the mixed heterodisulfide of CoB and CoM (CoM-S-S-CoB). This is the final step in methanogenesis (PubMed:2269306, PubMed:3350018). Neither N-6-mercaptohexanoylthreonine phosphate (H-S-HxoTP) nor N-8-mercaptooctanoylthreonine phosphate (H-SOcoTP) nor any other thiol compound such as CoA or CoM can substitute for CoB as the electron donor (PubMed:3350018).</text>
</comment>
<comment type="catalytic activity">
    <reaction evidence="4 6 7 9">
        <text>coenzyme B + methyl-coenzyme M = methane + coenzyme M-coenzyme B heterodisulfide</text>
        <dbReference type="Rhea" id="RHEA:12532"/>
        <dbReference type="ChEBI" id="CHEBI:16183"/>
        <dbReference type="ChEBI" id="CHEBI:58286"/>
        <dbReference type="ChEBI" id="CHEBI:58411"/>
        <dbReference type="ChEBI" id="CHEBI:58596"/>
        <dbReference type="EC" id="2.8.4.1"/>
    </reaction>
    <physiologicalReaction direction="left-to-right" evidence="7 14">
        <dbReference type="Rhea" id="RHEA:12533"/>
    </physiologicalReaction>
</comment>
<comment type="cofactor">
    <cofactor evidence="9 10 11">
        <name>coenzyme F430</name>
        <dbReference type="ChEBI" id="CHEBI:60540"/>
    </cofactor>
    <text evidence="9 10 11">Binds 2 coenzyme F430 non-covalently per MCR complex. Coenzyme F430 is a yellow nickel porphinoid (PubMed:3350018, PubMed:9367957). Methyl-coenzyme-M reductase is activated when the enzyme-bound coenzyme F430 is reduced to the Ni(I) oxidation state (PubMed:9030728).</text>
</comment>
<comment type="activity regulation">
    <text evidence="7 9">Methyl-coenzyme M reductase activity is inhibited by 3-nitrooxypropanol (3-NOP) in vitro and in vivo, by oxidation of its active site Ni(I), which stops both growth and methanogenesis (PubMed:27140643). Is also inhibited by the reaction product CoM-S-S-CoB (PubMed:3350018).</text>
</comment>
<comment type="pathway">
    <text evidence="7 9">One-carbon metabolism; methyl-coenzyme M reduction; methane from methyl-coenzyme M: step 1/1.</text>
</comment>
<comment type="subunit">
    <text evidence="4 9 11">MCR is a hexamer of two alpha, two beta, and two gamma chains, forming a dimer of heterotrimers.</text>
</comment>
<comment type="subcellular location">
    <subcellularLocation>
        <location evidence="5">Cytoplasm</location>
    </subcellularLocation>
    <text evidence="5">Under growth limiting conditions on nickel-depleted media, a fraction of 70% of the enzyme is localized close to the cytoplasmic membrane, which implies 'facultative' membrane association of the enzyme.</text>
</comment>
<comment type="developmental stage">
    <text evidence="4">There are two MCR complexes in this bacteria. MCR II is expressed in the early growth phase. Late growth cells contain mostly MCR I.</text>
</comment>
<comment type="miscellaneous">
    <text evidence="6">The MCR reaction has been shown to follow an ordered bi-bi ternary complex mechanism, in which methyl-SCoM must enter the MCR active site prior to CoB for a productive catalysis.</text>
</comment>
<comment type="similarity">
    <text evidence="13">Belongs to the methyl-coenzyme M reductase beta subunit family.</text>
</comment>
<sequence>MAKFEDKVDLYDDRGNLVEEQVPLEALSPLRNPAIKSIVQGIKRTVAVNLEGIENALKTAKVGGPACKIMGRELDLDIVGNAESIAAAAKEMIQVTEDDDTNVELLGGGKRALVQVPSARFDVAAEYSAAPLVTATAFVQAIINEFDVSMYDANMVKAAVLGRYPQSVEYMGANIATMLDIPQKLEGPGYALRNIMVNHVVAATLKNTLQAAALSTILEQTAMFEMGDAVGAFERMHLLGLAYQGMNADNLVFDLVKANGKEGTVGSVIADLVERALEDGVIKVEKELTDYKVYGTDDLAMWNAYAAAGLMAATMVNQGAARAAQGVSSTLLYYNDLIEFETGLPSVDFGKVEGTAVGFSFFSHSIYGGGGPGIFNGNHIVTRHSKGFAIPCVAAAMALDAGTQMFSPEATSGLIKEVFSQVDEFREPLKYVVEAAAEIKNEI</sequence>
<dbReference type="EC" id="2.8.4.1" evidence="4 6 7 9"/>
<dbReference type="EMBL" id="X07794">
    <property type="protein sequence ID" value="CAA30635.1"/>
    <property type="molecule type" value="Genomic_DNA"/>
</dbReference>
<dbReference type="EMBL" id="CP001710">
    <property type="protein sequence ID" value="ADL59131.1"/>
    <property type="molecule type" value="Genomic_DNA"/>
</dbReference>
<dbReference type="PIR" id="A28544">
    <property type="entry name" value="A28544"/>
</dbReference>
<dbReference type="RefSeq" id="WP_013296341.1">
    <property type="nucleotide sequence ID" value="NC_014408.1"/>
</dbReference>
<dbReference type="PDB" id="1HBM">
    <property type="method" value="X-ray"/>
    <property type="resolution" value="1.80 A"/>
    <property type="chains" value="B/E=2-443"/>
</dbReference>
<dbReference type="PDB" id="1HBN">
    <property type="method" value="X-ray"/>
    <property type="resolution" value="1.16 A"/>
    <property type="chains" value="B/E=2-443"/>
</dbReference>
<dbReference type="PDB" id="1HBO">
    <property type="method" value="X-ray"/>
    <property type="resolution" value="1.78 A"/>
    <property type="chains" value="B/E=2-443"/>
</dbReference>
<dbReference type="PDB" id="1HBU">
    <property type="method" value="X-ray"/>
    <property type="resolution" value="1.90 A"/>
    <property type="chains" value="B/E=2-443"/>
</dbReference>
<dbReference type="PDB" id="1MRO">
    <property type="method" value="X-ray"/>
    <property type="resolution" value="1.16 A"/>
    <property type="chains" value="B/E=2-443"/>
</dbReference>
<dbReference type="PDB" id="3M1V">
    <property type="method" value="X-ray"/>
    <property type="resolution" value="1.45 A"/>
    <property type="chains" value="B/E=2-443"/>
</dbReference>
<dbReference type="PDB" id="3M2R">
    <property type="method" value="X-ray"/>
    <property type="resolution" value="1.30 A"/>
    <property type="chains" value="B/E=2-443"/>
</dbReference>
<dbReference type="PDB" id="3M2U">
    <property type="method" value="X-ray"/>
    <property type="resolution" value="1.40 A"/>
    <property type="chains" value="B/E=2-443"/>
</dbReference>
<dbReference type="PDB" id="3M2V">
    <property type="method" value="X-ray"/>
    <property type="resolution" value="1.80 A"/>
    <property type="chains" value="B/E=2-443"/>
</dbReference>
<dbReference type="PDB" id="3M30">
    <property type="method" value="X-ray"/>
    <property type="resolution" value="1.45 A"/>
    <property type="chains" value="B/E=2-443"/>
</dbReference>
<dbReference type="PDB" id="3M32">
    <property type="method" value="X-ray"/>
    <property type="resolution" value="1.35 A"/>
    <property type="chains" value="B/E=2-443"/>
</dbReference>
<dbReference type="PDB" id="3POT">
    <property type="method" value="X-ray"/>
    <property type="resolution" value="1.20 A"/>
    <property type="chains" value="B/E=1-443"/>
</dbReference>
<dbReference type="PDB" id="5A0Y">
    <property type="method" value="X-ray"/>
    <property type="resolution" value="1.10 A"/>
    <property type="chains" value="B/E=1-443"/>
</dbReference>
<dbReference type="PDB" id="5G0R">
    <property type="method" value="X-ray"/>
    <property type="resolution" value="1.25 A"/>
    <property type="chains" value="B/E=1-443"/>
</dbReference>
<dbReference type="PDB" id="7B2H">
    <property type="method" value="X-ray"/>
    <property type="resolution" value="2.12 A"/>
    <property type="chains" value="B/E=1-443"/>
</dbReference>
<dbReference type="PDB" id="7SUC">
    <property type="method" value="X-ray"/>
    <property type="resolution" value="1.90 A"/>
    <property type="chains" value="B/b=2-443"/>
</dbReference>
<dbReference type="PDB" id="7SXM">
    <property type="method" value="X-ray"/>
    <property type="resolution" value="2.50 A"/>
    <property type="chains" value="B/E=2-443"/>
</dbReference>
<dbReference type="PDBsum" id="1HBM"/>
<dbReference type="PDBsum" id="1HBN"/>
<dbReference type="PDBsum" id="1HBO"/>
<dbReference type="PDBsum" id="1HBU"/>
<dbReference type="PDBsum" id="1MRO"/>
<dbReference type="PDBsum" id="3M1V"/>
<dbReference type="PDBsum" id="3M2R"/>
<dbReference type="PDBsum" id="3M2U"/>
<dbReference type="PDBsum" id="3M2V"/>
<dbReference type="PDBsum" id="3M30"/>
<dbReference type="PDBsum" id="3M32"/>
<dbReference type="PDBsum" id="3POT"/>
<dbReference type="PDBsum" id="5A0Y"/>
<dbReference type="PDBsum" id="5G0R"/>
<dbReference type="PDBsum" id="7B2H"/>
<dbReference type="PDBsum" id="7SUC"/>
<dbReference type="PDBsum" id="7SXM"/>
<dbReference type="SMR" id="P11560"/>
<dbReference type="STRING" id="79929.MTBMA_c15520"/>
<dbReference type="PaxDb" id="79929-MTBMA_c15520"/>
<dbReference type="GeneID" id="41327315"/>
<dbReference type="GeneID" id="9705261"/>
<dbReference type="KEGG" id="mmg:MTBMA_c15520"/>
<dbReference type="PATRIC" id="fig|79929.8.peg.1505"/>
<dbReference type="HOGENOM" id="CLU_617682_0_0_2"/>
<dbReference type="OrthoDB" id="52873at2157"/>
<dbReference type="BRENDA" id="2.8.4.1">
    <property type="organism ID" value="7427"/>
</dbReference>
<dbReference type="UniPathway" id="UPA00646">
    <property type="reaction ID" value="UER00699"/>
</dbReference>
<dbReference type="EvolutionaryTrace" id="P11560"/>
<dbReference type="Proteomes" id="UP000000345">
    <property type="component" value="Chromosome"/>
</dbReference>
<dbReference type="GO" id="GO:0005737">
    <property type="term" value="C:cytoplasm"/>
    <property type="evidence" value="ECO:0007669"/>
    <property type="project" value="UniProtKB-SubCell"/>
</dbReference>
<dbReference type="GO" id="GO:0050524">
    <property type="term" value="F:coenzyme-B sulfoethylthiotransferase activity"/>
    <property type="evidence" value="ECO:0000314"/>
    <property type="project" value="MENGO"/>
</dbReference>
<dbReference type="GO" id="GO:0015948">
    <property type="term" value="P:methanogenesis"/>
    <property type="evidence" value="ECO:0007669"/>
    <property type="project" value="UniProtKB-KW"/>
</dbReference>
<dbReference type="Gene3D" id="3.30.70.470">
    <property type="match status" value="1"/>
</dbReference>
<dbReference type="Gene3D" id="1.20.840.10">
    <property type="entry name" value="Methyl-coenzyme M reductase, alpha/beta subunit, C-terminal"/>
    <property type="match status" value="1"/>
</dbReference>
<dbReference type="InterPro" id="IPR008924">
    <property type="entry name" value="Me_CoM_Rdtase_asu/bsu_C"/>
</dbReference>
<dbReference type="InterPro" id="IPR015823">
    <property type="entry name" value="Me_CoM_Rdtase_asu_N_sub2"/>
</dbReference>
<dbReference type="InterPro" id="IPR003179">
    <property type="entry name" value="Me_CoM_Rdtase_bsu"/>
</dbReference>
<dbReference type="InterPro" id="IPR022679">
    <property type="entry name" value="Me_CoM_Rdtase_bsu_C"/>
</dbReference>
<dbReference type="InterPro" id="IPR022680">
    <property type="entry name" value="Me_CoM_Rdtase_bsu_N"/>
</dbReference>
<dbReference type="InterPro" id="IPR009024">
    <property type="entry name" value="Me_CoM_Rdtase_Fd-like_fold"/>
</dbReference>
<dbReference type="NCBIfam" id="TIGR03257">
    <property type="entry name" value="met_CoM_red_bet"/>
    <property type="match status" value="1"/>
</dbReference>
<dbReference type="Pfam" id="PF02241">
    <property type="entry name" value="MCR_beta"/>
    <property type="match status" value="1"/>
</dbReference>
<dbReference type="Pfam" id="PF02783">
    <property type="entry name" value="MCR_beta_N"/>
    <property type="match status" value="1"/>
</dbReference>
<dbReference type="PIRSF" id="PIRSF000263">
    <property type="entry name" value="Meth_CoM_rd_beta"/>
    <property type="match status" value="1"/>
</dbReference>
<dbReference type="SUPFAM" id="SSF48081">
    <property type="entry name" value="Methyl-coenzyme M reductase alpha and beta chain C-terminal domain"/>
    <property type="match status" value="1"/>
</dbReference>
<dbReference type="SUPFAM" id="SSF55088">
    <property type="entry name" value="Methyl-coenzyme M reductase subunits"/>
    <property type="match status" value="1"/>
</dbReference>
<name>MCRB_METTM</name>
<proteinExistence type="evidence at protein level"/>
<reference key="1">
    <citation type="journal article" date="1988" name="J. Bacteriol.">
        <title>Cloning and characterization of the methyl coenzyme M reductase genes from Methanobacterium thermoautotrophicum.</title>
        <authorList>
            <person name="Bokranz M."/>
            <person name="Baeumner G."/>
            <person name="Allmansberger R."/>
            <person name="Ankel-Fuchs D."/>
            <person name="Klein A."/>
        </authorList>
    </citation>
    <scope>NUCLEOTIDE SEQUENCE [GENOMIC DNA]</scope>
    <source>
        <strain>ATCC BAA-927 / DSM 2133 / JCM 14651 / NBRC 100331 / OCM 82 / Marburg</strain>
    </source>
</reference>
<reference key="2">
    <citation type="journal article" date="2010" name="J. Bacteriol.">
        <title>Complete genome sequence of Methanothermobacter marburgensis, a methanoarchaeon model organism.</title>
        <authorList>
            <person name="Liesegang H."/>
            <person name="Kaster A.K."/>
            <person name="Wiezer A."/>
            <person name="Goenrich M."/>
            <person name="Wollherr A."/>
            <person name="Seedorf H."/>
            <person name="Gottschalk G."/>
            <person name="Thauer R.K."/>
        </authorList>
    </citation>
    <scope>NUCLEOTIDE SEQUENCE [LARGE SCALE GENOMIC DNA]</scope>
    <source>
        <strain>ATCC BAA-927 / DSM 2133 / JCM 14651 / NBRC 100331 / OCM 82 / Marburg</strain>
    </source>
</reference>
<reference key="3">
    <citation type="journal article" date="1990" name="Eur. J. Biochem.">
        <title>Two genetically distinct methyl-coenzyme M reductases in Methanobacterium thermoautotrophicum strain Marburg and delta H.</title>
        <authorList>
            <person name="Rospert S."/>
            <person name="Linder D."/>
            <person name="Ellermann J."/>
            <person name="Thauer R.K."/>
        </authorList>
    </citation>
    <scope>PROTEIN SEQUENCE OF 2-21</scope>
    <scope>FUNCTION</scope>
    <scope>CATALYTIC ACTIVITY</scope>
    <scope>SUBUNIT</scope>
    <scope>DEVELOPMENTAL STAGE</scope>
    <source>
        <strain>ATCC BAA-927 / DSM 2133 / JCM 14651 / NBRC 100331 / OCM 82 / Marburg</strain>
    </source>
</reference>
<reference key="4">
    <citation type="journal article" date="1988" name="Eur. J. Biochem.">
        <title>The final step in methane formation. Investigations with highly purified methyl-CoM reductase (component C) from Methanobacterium thermoautotrophicum (strain Marburg).</title>
        <authorList>
            <person name="Ellermann J."/>
            <person name="Hedderich R."/>
            <person name="Boecher R."/>
            <person name="Thauer R.K."/>
        </authorList>
    </citation>
    <scope>FUNCTION</scope>
    <scope>CATALYTIC ACTIVITY</scope>
    <scope>SUBSTRATE SPECIFICITY</scope>
    <scope>COFACTOR</scope>
    <scope>ACTIVITY REGULATION</scope>
    <scope>PATHWAY</scope>
    <scope>SUBUNIT</scope>
    <source>
        <strain>ATCC BAA-927 / DSM 2133 / JCM 14651 / NBRC 100331 / OCM 82 / Marburg</strain>
    </source>
</reference>
<reference key="5">
    <citation type="journal article" date="1997" name="Eur. J. Biochem.">
        <title>Purified methyl-coenzyme-M reductase is activated when the enzyme-bound coenzyme F430 is reduced to the nickel(I) oxidation state by titanium(III) citrate.</title>
        <authorList>
            <person name="Goubeaud M."/>
            <person name="Schreiner G."/>
            <person name="Thauer R.K."/>
        </authorList>
    </citation>
    <scope>COFACTOR</scope>
    <source>
        <strain>ATCC BAA-927 / DSM 2133 / JCM 14651 / NBRC 100331 / OCM 82 / Marburg</strain>
    </source>
</reference>
<reference key="6">
    <citation type="journal article" date="2013" name="Archaea">
        <title>Localization of methyl-Coenzyme M reductase as metabolic marker for diverse methanogenic Archaea.</title>
        <authorList>
            <person name="Wrede C."/>
            <person name="Walbaum U."/>
            <person name="Ducki A."/>
            <person name="Heieren I."/>
            <person name="Hoppert M."/>
        </authorList>
    </citation>
    <scope>SUBCELLULAR LOCATION</scope>
    <source>
        <strain>ATCC BAA-927 / DSM 2133 / JCM 14651 / NBRC 100331 / OCM 82 / Marburg</strain>
    </source>
</reference>
<reference key="7">
    <citation type="journal article" date="2015" name="J. Biol. Chem.">
        <title>The reaction mechanism of methyl-coenzyme M reductase: how an enzyme enforces strict binding order.</title>
        <authorList>
            <person name="Wongnate T."/>
            <person name="Ragsdale S.W."/>
        </authorList>
    </citation>
    <scope>CATALYTIC ACTIVITY</scope>
    <scope>REACTION MECHANISM</scope>
    <source>
        <strain>ATCC BAA-927 / DSM 2133 / JCM 14651 / NBRC 100331 / OCM 82 / Marburg</strain>
    </source>
</reference>
<reference evidence="19" key="8">
    <citation type="journal article" date="1997" name="Science">
        <title>Crystal structure of methyl-coenzyme M reductase: the key enzyme of biological methane formation.</title>
        <authorList>
            <person name="Ermler U."/>
            <person name="Grabarse W."/>
            <person name="Shima S."/>
            <person name="Goubeaud M."/>
            <person name="Thauer R.K."/>
        </authorList>
    </citation>
    <scope>X-RAY CRYSTALLOGRAPHY (1.16 ANGSTROMS) OF 2-443 IN COMPLEX WITH COENZYME F430; COENZYME B; COENZYME M AND MCR SUBUNITS ALPHA AND GAMMA</scope>
    <scope>COFACTOR</scope>
    <scope>SUBUNIT</scope>
    <source>
        <strain>ATCC BAA-927 / DSM 2133 / JCM 14651 / NBRC 100331 / OCM 82 / Marburg</strain>
    </source>
</reference>
<reference evidence="15 16 17 18" key="9">
    <citation type="journal article" date="2001" name="J. Mol. Biol.">
        <title>On the mechanism of biological methane formation: structural evidence for conformational changes in methyl-coenzyme M reductase upon substrate binding.</title>
        <authorList>
            <person name="Grabarse W."/>
            <person name="Mahlert F."/>
            <person name="Duin E.C."/>
            <person name="Goubeaud M."/>
            <person name="Shima S."/>
            <person name="Thauer R.K."/>
            <person name="Lamzin V."/>
            <person name="Ermler U."/>
        </authorList>
    </citation>
    <scope>X-RAY CRYSTALLOGRAPHY (1.16 ANGSTROMS) OF 2-443 IN COMPLEXES WITH COM-S-S-COB; COENZYME B; COENZYME F430; COENZYME M AND MCR SUBUNITS ALPHA AND GAMMA</scope>
    <source>
        <strain>ATCC BAA-927 / DSM 2133 / JCM 14651 / NBRC 100331 / OCM 82 / Marburg</strain>
    </source>
</reference>
<reference evidence="20 21 22 23 24 25" key="10">
    <citation type="journal article" date="2010" name="Biochemistry">
        <title>Structural insight into methyl-coenzyme M reductase chemistry using coenzyme B analogues.</title>
        <authorList>
            <person name="Cedervall P.E."/>
            <person name="Dey M."/>
            <person name="Pearson A.R."/>
            <person name="Ragsdale S.W."/>
            <person name="Wilmot C.M."/>
        </authorList>
    </citation>
    <scope>X-RAY CRYSTALLOGRAPHY (1.30 ANGSTROMS) OF 2-443 IN COMPLEXES WITH COM-S-S-COB; COENZYME B; COENZYME F430; COENZYME M; COENZYME B ANALOGS AND MCR SUBUNITS ALPHA AND GAMMA</scope>
    <source>
        <strain>ATCC BAA-927 / DSM 2133 / JCM 14651 / NBRC 100331 / OCM 82 / Marburg</strain>
    </source>
</reference>
<reference evidence="26" key="11">
    <citation type="journal article" date="2011" name="J. Am. Chem. Soc.">
        <title>Structural analysis of a Ni-methyl species in methyl-coenzyme M reductase from Methanothermobacter marburgensis.</title>
        <authorList>
            <person name="Cedervall P.E."/>
            <person name="Dey M."/>
            <person name="Li X."/>
            <person name="Sarangi R."/>
            <person name="Hedman B."/>
            <person name="Ragsdale S.W."/>
            <person name="Wilmot C.M."/>
        </authorList>
    </citation>
    <scope>X-RAY CRYSTALLOGRAPHY (1.20 ANGSTROMS) IN COMPLEX WITH COENZYME F430; COENZYME B; COENZYME M AND MCR SUBUNITS ALPHA AND GAMMA</scope>
    <source>
        <strain>ATCC BAA-927 / DSM 2133 / JCM 14651 / NBRC 100331 / OCM 82 / Marburg</strain>
    </source>
</reference>
<reference evidence="27" key="12">
    <citation type="journal article" date="2016" name="Angew. Chem. Int. Ed. Engl.">
        <title>Didehydroaspartate Modification in Methyl-CoenzymeM Reductase Catalyzing Methane Formation.</title>
        <authorList>
            <person name="Wagner T."/>
            <person name="Kahnt J."/>
            <person name="Ermler U."/>
            <person name="Shima S."/>
        </authorList>
    </citation>
    <scope>X-RAY CRYSTALLOGRAPHY (1.10 ANGSTROMS) IN COMPLEX WITH COENZYME F430; COENZYME B; COENZYME M AND MCR SUBUNITS ALPHA AND GAMMA</scope>
    <source>
        <strain>ATCC BAA-927 / DSM 2133 / JCM 14651 / NBRC 100331 / OCM 82 / Marburg</strain>
    </source>
</reference>
<reference evidence="28" key="13">
    <citation type="journal article" date="2016" name="Proc. Natl. Acad. Sci. U.S.A.">
        <title>Mode of action uncovered for the specific reduction of methane emissions from ruminants by the small molecule 3-nitrooxypropanol.</title>
        <authorList>
            <person name="Duin E.C."/>
            <person name="Wagner T."/>
            <person name="Shima S."/>
            <person name="Prakash D."/>
            <person name="Cronin B."/>
            <person name="Yanez-Ruiz D.R."/>
            <person name="Duval S."/>
            <person name="Rumbeli R."/>
            <person name="Stemmler R.T."/>
            <person name="Thauer R.K."/>
            <person name="Kindermann M."/>
        </authorList>
    </citation>
    <scope>X-RAY CRYSTALLOGRAPHY (1.25 ANGSTROMS) IN COMPLEX WITH COENZYME B; COENZYME F430 AND MCR SUBUNITS ALPHA AND GAMMA</scope>
    <scope>ACTIVITY REGULATION</scope>
    <source>
        <strain>ATCC BAA-927 / DSM 2133 / JCM 14651 / NBRC 100331 / OCM 82 / Marburg</strain>
    </source>
</reference>
<gene>
    <name type="primary">mcrB</name>
    <name type="ordered locus">MTBMA_c15520</name>
</gene>
<protein>
    <recommendedName>
        <fullName evidence="12">Methyl-coenzyme M reductase I subunit beta</fullName>
        <shortName evidence="12">MCR I beta</shortName>
        <ecNumber evidence="4 6 7 9">2.8.4.1</ecNumber>
    </recommendedName>
    <alternativeName>
        <fullName>Coenzyme-B sulfoethylthiotransferase beta</fullName>
    </alternativeName>
</protein>
<accession>P11560</accession>
<accession>D9PY33</accession>
<organism>
    <name type="scientific">Methanothermobacter marburgensis (strain ATCC BAA-927 / DSM 2133 / JCM 14651 / NBRC 100331 / OCM 82 / Marburg)</name>
    <name type="common">Methanobacterium thermoautotrophicum</name>
    <dbReference type="NCBI Taxonomy" id="79929"/>
    <lineage>
        <taxon>Archaea</taxon>
        <taxon>Methanobacteriati</taxon>
        <taxon>Methanobacteriota</taxon>
        <taxon>Methanomada group</taxon>
        <taxon>Methanobacteria</taxon>
        <taxon>Methanobacteriales</taxon>
        <taxon>Methanobacteriaceae</taxon>
        <taxon>Methanothermobacter</taxon>
    </lineage>
</organism>